<feature type="chain" id="PRO_1000097480" description="Translational regulator CsrA">
    <location>
        <begin position="1"/>
        <end position="78"/>
    </location>
</feature>
<comment type="function">
    <text evidence="1">A translational regulator that binds mRNA to regulate translation initiation and/or mRNA stability. Usually binds in the 5'-UTR at or near the Shine-Dalgarno sequence preventing ribosome-binding, thus repressing translation. Its main target seems to be the major flagellin gene, while its function is anatagonized by FliW.</text>
</comment>
<comment type="subunit">
    <text evidence="1">Homodimer; the beta-strands of each monomer intercalate to form a hydrophobic core, while the alpha-helices form wings that extend away from the core.</text>
</comment>
<comment type="subcellular location">
    <subcellularLocation>
        <location evidence="1">Cytoplasm</location>
    </subcellularLocation>
</comment>
<comment type="similarity">
    <text evidence="1">Belongs to the CsrA/RsmA family.</text>
</comment>
<protein>
    <recommendedName>
        <fullName evidence="1">Translational regulator CsrA</fullName>
    </recommendedName>
</protein>
<accession>B2RZP5</accession>
<dbReference type="EMBL" id="CP000048">
    <property type="protein sequence ID" value="AAX16701.1"/>
    <property type="molecule type" value="Genomic_DNA"/>
</dbReference>
<dbReference type="RefSeq" id="WP_012421958.1">
    <property type="nucleotide sequence ID" value="NZ_CP073136.1"/>
</dbReference>
<dbReference type="SMR" id="B2RZP5"/>
<dbReference type="GeneID" id="71842991"/>
<dbReference type="KEGG" id="bhr:BH0184"/>
<dbReference type="HOGENOM" id="CLU_164837_0_2_12"/>
<dbReference type="Proteomes" id="UP000008834">
    <property type="component" value="Chromosome"/>
</dbReference>
<dbReference type="GO" id="GO:0005829">
    <property type="term" value="C:cytosol"/>
    <property type="evidence" value="ECO:0007669"/>
    <property type="project" value="TreeGrafter"/>
</dbReference>
<dbReference type="GO" id="GO:0048027">
    <property type="term" value="F:mRNA 5'-UTR binding"/>
    <property type="evidence" value="ECO:0007669"/>
    <property type="project" value="UniProtKB-UniRule"/>
</dbReference>
<dbReference type="GO" id="GO:0044781">
    <property type="term" value="P:bacterial-type flagellum organization"/>
    <property type="evidence" value="ECO:0007669"/>
    <property type="project" value="UniProtKB-KW"/>
</dbReference>
<dbReference type="GO" id="GO:0006402">
    <property type="term" value="P:mRNA catabolic process"/>
    <property type="evidence" value="ECO:0007669"/>
    <property type="project" value="InterPro"/>
</dbReference>
<dbReference type="GO" id="GO:0045947">
    <property type="term" value="P:negative regulation of translational initiation"/>
    <property type="evidence" value="ECO:0007669"/>
    <property type="project" value="UniProtKB-UniRule"/>
</dbReference>
<dbReference type="GO" id="GO:1902208">
    <property type="term" value="P:regulation of bacterial-type flagellum assembly"/>
    <property type="evidence" value="ECO:0007669"/>
    <property type="project" value="UniProtKB-UniRule"/>
</dbReference>
<dbReference type="GO" id="GO:0006109">
    <property type="term" value="P:regulation of carbohydrate metabolic process"/>
    <property type="evidence" value="ECO:0007669"/>
    <property type="project" value="InterPro"/>
</dbReference>
<dbReference type="FunFam" id="2.60.40.4380:FF:000002">
    <property type="entry name" value="Translational regulator CsrA"/>
    <property type="match status" value="1"/>
</dbReference>
<dbReference type="Gene3D" id="2.60.40.4380">
    <property type="entry name" value="Translational regulator CsrA"/>
    <property type="match status" value="1"/>
</dbReference>
<dbReference type="HAMAP" id="MF_00167">
    <property type="entry name" value="CsrA"/>
    <property type="match status" value="1"/>
</dbReference>
<dbReference type="InterPro" id="IPR003751">
    <property type="entry name" value="CsrA"/>
</dbReference>
<dbReference type="InterPro" id="IPR036107">
    <property type="entry name" value="CsrA_sf"/>
</dbReference>
<dbReference type="NCBIfam" id="TIGR00202">
    <property type="entry name" value="csrA"/>
    <property type="match status" value="1"/>
</dbReference>
<dbReference type="NCBIfam" id="NF002469">
    <property type="entry name" value="PRK01712.1"/>
    <property type="match status" value="1"/>
</dbReference>
<dbReference type="PANTHER" id="PTHR34984">
    <property type="entry name" value="CARBON STORAGE REGULATOR"/>
    <property type="match status" value="1"/>
</dbReference>
<dbReference type="PANTHER" id="PTHR34984:SF1">
    <property type="entry name" value="CARBON STORAGE REGULATOR"/>
    <property type="match status" value="1"/>
</dbReference>
<dbReference type="Pfam" id="PF02599">
    <property type="entry name" value="CsrA"/>
    <property type="match status" value="1"/>
</dbReference>
<dbReference type="SUPFAM" id="SSF117130">
    <property type="entry name" value="CsrA-like"/>
    <property type="match status" value="1"/>
</dbReference>
<proteinExistence type="inferred from homology"/>
<evidence type="ECO:0000255" key="1">
    <source>
        <dbReference type="HAMAP-Rule" id="MF_00167"/>
    </source>
</evidence>
<reference key="1">
    <citation type="submission" date="2004-12" db="EMBL/GenBank/DDBJ databases">
        <title>The genome sequence of Borrelia hermsii and Borrelia turicatae: comparative analysis of two agents of endemic N. America relapsing fever.</title>
        <authorList>
            <person name="Porcella S.F."/>
            <person name="Raffel S.J."/>
            <person name="Schrumpf M.E."/>
            <person name="Montgomery B."/>
            <person name="Smith T."/>
            <person name="Schwan T.G."/>
        </authorList>
    </citation>
    <scope>NUCLEOTIDE SEQUENCE [LARGE SCALE GENOMIC DNA]</scope>
    <source>
        <strain>HS1 / DAH</strain>
    </source>
</reference>
<organism>
    <name type="scientific">Borrelia hermsii (strain HS1 / DAH)</name>
    <dbReference type="NCBI Taxonomy" id="314723"/>
    <lineage>
        <taxon>Bacteria</taxon>
        <taxon>Pseudomonadati</taxon>
        <taxon>Spirochaetota</taxon>
        <taxon>Spirochaetia</taxon>
        <taxon>Spirochaetales</taxon>
        <taxon>Borreliaceae</taxon>
        <taxon>Borrelia</taxon>
    </lineage>
</organism>
<name>CSRA_BORHD</name>
<sequence length="78" mass="9142">MLVLSRKANESIKIDSNIEISILEIKKDSVKIAIKAPENIKILRSEIYDIIKEENKKSILQDKNNIHKIKNLFDYFNK</sequence>
<gene>
    <name evidence="1" type="primary">csrA</name>
    <name type="ordered locus">BH0184</name>
</gene>
<keyword id="KW-1005">Bacterial flagellum biogenesis</keyword>
<keyword id="KW-0963">Cytoplasm</keyword>
<keyword id="KW-0678">Repressor</keyword>
<keyword id="KW-0694">RNA-binding</keyword>
<keyword id="KW-0810">Translation regulation</keyword>